<keyword id="KW-0997">Cell inner membrane</keyword>
<keyword id="KW-1003">Cell membrane</keyword>
<keyword id="KW-0472">Membrane</keyword>
<keyword id="KW-1185">Reference proteome</keyword>
<keyword id="KW-0812">Transmembrane</keyword>
<keyword id="KW-1133">Transmembrane helix</keyword>
<keyword id="KW-0813">Transport</keyword>
<feature type="chain" id="PRO_0000060182" description="Spermidine/putrescine transport system permease protein PotC">
    <location>
        <begin position="1"/>
        <end position="264"/>
    </location>
</feature>
<feature type="topological domain" description="Cytoplasmic" evidence="2">
    <location>
        <begin position="1"/>
        <end position="7"/>
    </location>
</feature>
<feature type="transmembrane region" description="Helical" evidence="3">
    <location>
        <begin position="8"/>
        <end position="27"/>
    </location>
</feature>
<feature type="topological domain" description="Periplasmic" evidence="2">
    <location>
        <begin position="28"/>
        <end position="65"/>
    </location>
</feature>
<feature type="transmembrane region" description="Helical" evidence="3">
    <location>
        <begin position="66"/>
        <end position="85"/>
    </location>
</feature>
<feature type="topological domain" description="Cytoplasmic" evidence="2">
    <location>
        <begin position="86"/>
        <end position="100"/>
    </location>
</feature>
<feature type="transmembrane region" description="Helical" evidence="3">
    <location>
        <begin position="101"/>
        <end position="120"/>
    </location>
</feature>
<feature type="topological domain" description="Periplasmic" evidence="2">
    <location>
        <begin position="121"/>
        <end position="128"/>
    </location>
</feature>
<feature type="transmembrane region" description="Helical" evidence="3">
    <location>
        <begin position="129"/>
        <end position="148"/>
    </location>
</feature>
<feature type="topological domain" description="Cytoplasmic" evidence="2">
    <location>
        <begin position="149"/>
        <end position="176"/>
    </location>
</feature>
<feature type="transmembrane region" description="Helical" evidence="3">
    <location>
        <begin position="177"/>
        <end position="196"/>
    </location>
</feature>
<feature type="topological domain" description="Periplasmic" evidence="2">
    <location>
        <begin position="197"/>
        <end position="231"/>
    </location>
</feature>
<feature type="transmembrane region" description="Helical" evidence="3">
    <location>
        <begin position="232"/>
        <end position="251"/>
    </location>
</feature>
<feature type="topological domain" description="Cytoplasmic" evidence="2">
    <location>
        <begin position="252"/>
        <end position="264"/>
    </location>
</feature>
<feature type="domain" description="ABC transmembrane type-1" evidence="3">
    <location>
        <begin position="60"/>
        <end position="248"/>
    </location>
</feature>
<protein>
    <recommendedName>
        <fullName>Spermidine/putrescine transport system permease protein PotC</fullName>
    </recommendedName>
</protein>
<comment type="function">
    <text evidence="1">Required for the activity of the bacterial periplasmic transport system of putrescine and spermidine.</text>
</comment>
<comment type="subcellular location">
    <subcellularLocation>
        <location evidence="1">Cell inner membrane</location>
        <topology evidence="3">Multi-pass membrane protein</topology>
    </subcellularLocation>
</comment>
<comment type="similarity">
    <text evidence="4">Belongs to the binding-protein-dependent transport system permease family. CysTW subfamily.</text>
</comment>
<reference key="1">
    <citation type="journal article" date="2001" name="Nature">
        <title>Genome sequence of enterohaemorrhagic Escherichia coli O157:H7.</title>
        <authorList>
            <person name="Perna N.T."/>
            <person name="Plunkett G. III"/>
            <person name="Burland V."/>
            <person name="Mau B."/>
            <person name="Glasner J.D."/>
            <person name="Rose D.J."/>
            <person name="Mayhew G.F."/>
            <person name="Evans P.S."/>
            <person name="Gregor J."/>
            <person name="Kirkpatrick H.A."/>
            <person name="Posfai G."/>
            <person name="Hackett J."/>
            <person name="Klink S."/>
            <person name="Boutin A."/>
            <person name="Shao Y."/>
            <person name="Miller L."/>
            <person name="Grotbeck E.J."/>
            <person name="Davis N.W."/>
            <person name="Lim A."/>
            <person name="Dimalanta E.T."/>
            <person name="Potamousis K."/>
            <person name="Apodaca J."/>
            <person name="Anantharaman T.S."/>
            <person name="Lin J."/>
            <person name="Yen G."/>
            <person name="Schwartz D.C."/>
            <person name="Welch R.A."/>
            <person name="Blattner F.R."/>
        </authorList>
    </citation>
    <scope>NUCLEOTIDE SEQUENCE [LARGE SCALE GENOMIC DNA]</scope>
    <source>
        <strain>O157:H7 / EDL933 / ATCC 700927 / EHEC</strain>
    </source>
</reference>
<reference key="2">
    <citation type="journal article" date="2001" name="DNA Res.">
        <title>Complete genome sequence of enterohemorrhagic Escherichia coli O157:H7 and genomic comparison with a laboratory strain K-12.</title>
        <authorList>
            <person name="Hayashi T."/>
            <person name="Makino K."/>
            <person name="Ohnishi M."/>
            <person name="Kurokawa K."/>
            <person name="Ishii K."/>
            <person name="Yokoyama K."/>
            <person name="Han C.-G."/>
            <person name="Ohtsubo E."/>
            <person name="Nakayama K."/>
            <person name="Murata T."/>
            <person name="Tanaka M."/>
            <person name="Tobe T."/>
            <person name="Iida T."/>
            <person name="Takami H."/>
            <person name="Honda T."/>
            <person name="Sasakawa C."/>
            <person name="Ogasawara N."/>
            <person name="Yasunaga T."/>
            <person name="Kuhara S."/>
            <person name="Shiba T."/>
            <person name="Hattori M."/>
            <person name="Shinagawa H."/>
        </authorList>
    </citation>
    <scope>NUCLEOTIDE SEQUENCE [LARGE SCALE GENOMIC DNA]</scope>
    <source>
        <strain>O157:H7 / Sakai / RIMD 0509952 / EHEC</strain>
    </source>
</reference>
<proteinExistence type="inferred from homology"/>
<evidence type="ECO:0000250" key="1"/>
<evidence type="ECO:0000255" key="2"/>
<evidence type="ECO:0000255" key="3">
    <source>
        <dbReference type="PROSITE-ProRule" id="PRU00441"/>
    </source>
</evidence>
<evidence type="ECO:0000305" key="4"/>
<name>POTC_ECO57</name>
<organism>
    <name type="scientific">Escherichia coli O157:H7</name>
    <dbReference type="NCBI Taxonomy" id="83334"/>
    <lineage>
        <taxon>Bacteria</taxon>
        <taxon>Pseudomonadati</taxon>
        <taxon>Pseudomonadota</taxon>
        <taxon>Gammaproteobacteria</taxon>
        <taxon>Enterobacterales</taxon>
        <taxon>Enterobacteriaceae</taxon>
        <taxon>Escherichia</taxon>
    </lineage>
</organism>
<dbReference type="EMBL" id="AE005174">
    <property type="protein sequence ID" value="AAG55868.1"/>
    <property type="molecule type" value="Genomic_DNA"/>
</dbReference>
<dbReference type="EMBL" id="BA000007">
    <property type="protein sequence ID" value="BAB34923.1"/>
    <property type="molecule type" value="Genomic_DNA"/>
</dbReference>
<dbReference type="PIR" id="D90816">
    <property type="entry name" value="D90816"/>
</dbReference>
<dbReference type="PIR" id="H85675">
    <property type="entry name" value="H85675"/>
</dbReference>
<dbReference type="RefSeq" id="NP_309527.1">
    <property type="nucleotide sequence ID" value="NC_002695.1"/>
</dbReference>
<dbReference type="RefSeq" id="WP_000580316.1">
    <property type="nucleotide sequence ID" value="NZ_VOAI01000018.1"/>
</dbReference>
<dbReference type="SMR" id="P0AFK8"/>
<dbReference type="STRING" id="155864.Z1763"/>
<dbReference type="GeneID" id="912458"/>
<dbReference type="GeneID" id="93776286"/>
<dbReference type="KEGG" id="ece:Z1763"/>
<dbReference type="KEGG" id="ecs:ECs_1500"/>
<dbReference type="PATRIC" id="fig|386585.9.peg.1602"/>
<dbReference type="eggNOG" id="COG1177">
    <property type="taxonomic scope" value="Bacteria"/>
</dbReference>
<dbReference type="HOGENOM" id="CLU_016047_3_0_6"/>
<dbReference type="OMA" id="NKFGMKW"/>
<dbReference type="Proteomes" id="UP000000558">
    <property type="component" value="Chromosome"/>
</dbReference>
<dbReference type="Proteomes" id="UP000002519">
    <property type="component" value="Chromosome"/>
</dbReference>
<dbReference type="GO" id="GO:0005886">
    <property type="term" value="C:plasma membrane"/>
    <property type="evidence" value="ECO:0007669"/>
    <property type="project" value="UniProtKB-SubCell"/>
</dbReference>
<dbReference type="GO" id="GO:0055085">
    <property type="term" value="P:transmembrane transport"/>
    <property type="evidence" value="ECO:0007669"/>
    <property type="project" value="InterPro"/>
</dbReference>
<dbReference type="CDD" id="cd06261">
    <property type="entry name" value="TM_PBP2"/>
    <property type="match status" value="1"/>
</dbReference>
<dbReference type="FunFam" id="1.10.3720.10:FF:000013">
    <property type="entry name" value="Spermidine/putrescine ABC transporter permease PotC"/>
    <property type="match status" value="1"/>
</dbReference>
<dbReference type="Gene3D" id="1.10.3720.10">
    <property type="entry name" value="MetI-like"/>
    <property type="match status" value="1"/>
</dbReference>
<dbReference type="InterPro" id="IPR051789">
    <property type="entry name" value="Bact_Polyamine_Transport"/>
</dbReference>
<dbReference type="InterPro" id="IPR000515">
    <property type="entry name" value="MetI-like"/>
</dbReference>
<dbReference type="InterPro" id="IPR035906">
    <property type="entry name" value="MetI-like_sf"/>
</dbReference>
<dbReference type="NCBIfam" id="NF007047">
    <property type="entry name" value="PRK09500.1"/>
    <property type="match status" value="1"/>
</dbReference>
<dbReference type="PANTHER" id="PTHR43848">
    <property type="entry name" value="PUTRESCINE TRANSPORT SYSTEM PERMEASE PROTEIN POTI"/>
    <property type="match status" value="1"/>
</dbReference>
<dbReference type="PANTHER" id="PTHR43848:SF5">
    <property type="entry name" value="SPERMIDINE_PUTRESCINE TRANSPORT SYSTEM PERMEASE PROTEIN POTC"/>
    <property type="match status" value="1"/>
</dbReference>
<dbReference type="Pfam" id="PF00528">
    <property type="entry name" value="BPD_transp_1"/>
    <property type="match status" value="1"/>
</dbReference>
<dbReference type="SUPFAM" id="SSF161098">
    <property type="entry name" value="MetI-like"/>
    <property type="match status" value="1"/>
</dbReference>
<dbReference type="PROSITE" id="PS50928">
    <property type="entry name" value="ABC_TM1"/>
    <property type="match status" value="1"/>
</dbReference>
<gene>
    <name type="primary">potC</name>
    <name type="ordered locus">Z1763</name>
    <name type="ordered locus">ECs1500</name>
</gene>
<accession>P0AFK8</accession>
<accession>P23859</accession>
<sequence>MIGRLLRGGFMTAIYAYLYIPIIILIVNSFNSSRFGINWQGFTTKWYSLLMNNDSLLQAAQHSLTMAVFSATFATLIGSLTAVALYRYRFRGKPFVSGMLFVVMMSPDIVMAISLLVLFMLLGIQLGFWSLLFSHITFCLPFVVVTVYSRLKGFDVRMLEAAKDLGASEFTILRKIILPLAMPAVAAGWVLSFTLSMDDVVVSSFVTGPSYEILPLKIYSMVKVGVSPEVNALATILLVLSLVMVIASQLIARDKTKGNTGDVK</sequence>